<protein>
    <recommendedName>
        <fullName evidence="1">DNA-directed RNA polymerase subunit beta'</fullName>
        <shortName evidence="1">RNAP subunit beta'</shortName>
        <ecNumber evidence="1">2.7.7.6</ecNumber>
    </recommendedName>
    <alternativeName>
        <fullName evidence="1">RNA polymerase subunit beta'</fullName>
    </alternativeName>
    <alternativeName>
        <fullName evidence="1">Transcriptase subunit beta'</fullName>
    </alternativeName>
</protein>
<organism>
    <name type="scientific">Afipia carboxidovorans (strain ATCC 49405 / DSM 1227 / KCTC 32145 / OM5)</name>
    <name type="common">Oligotropha carboxidovorans</name>
    <dbReference type="NCBI Taxonomy" id="504832"/>
    <lineage>
        <taxon>Bacteria</taxon>
        <taxon>Pseudomonadati</taxon>
        <taxon>Pseudomonadota</taxon>
        <taxon>Alphaproteobacteria</taxon>
        <taxon>Hyphomicrobiales</taxon>
        <taxon>Nitrobacteraceae</taxon>
        <taxon>Afipia</taxon>
    </lineage>
</organism>
<sequence length="1399" mass="155616">MNQEIMNLFNPTTPAQVFDQIRISIASPEKILSWSYGEIKKPETINYRTFKPERDGLFCARIFGPIKDYECLCGKYKRMKYKGIICEKCSVEVTLSRVRRERMGHIELAAPVAHIWFLKSLPSRIGLLLDMTLKDLERILYFEYYVVLEPGLTALKDRQLLSEEEYLKAQDEYGQDSFTAMIGAEAIRELLRGLDLEKLEAQLRADMAETDSDIKHKKFAKRLKIVEAFRNSGNKPEWMIMTVVPVIPPDLRPLVPLDGGRFATSDLNDLYRRVINRNNRLKRLMELRAPDIIIRNEKRMLQEAVDALFDNGRRGRVITGANKRPLKSLADMLKGKQGRFRQNLLGKRVDYSGRSVIVVGPELKLHQCGLPKKMALELFKPFIYSRLDAKGLSTTVKQAKKLVEKERPEVWDILDEVIREHPVLLNRAPTLHRLGIQAFEPTLIEGKAIQLHPLVCAAFNADFDGDQMAVHVPLSLEAQLEARVLMMSTNNILHPANGQPIIVPSQDIVLGLYYLSIMREGLAGEGKVYGEMAEIEHALYSKVIHLHTKIKYRWHGVGEDGKPVTKWYETTAGRVMLGQVLPNHPKIPFDAINKLMTKREISGVIDQVYRHCGQKETVIFCDRIMALGFHNAFKAGISFGKDDMVVPQGKWKVVDDTRSMAKEFEQQYNDGLITQGEKYNKVVDAWSKATEKIADEMMKEISSVKKTTKGNEAQINSIYMMAHSGARGSPAQMRQLAGMRGLMAKPSGEIIETPIISNFKEGLSVLEYFNSTHGARKGLADTALKTANSGYLTRRLVDVAQDCIINASDCGTNLGIKMRAIVDAGTVVASLGSRILGRTACEDIREPSTNNVIVPRGTLMEESHVDAIQRAGVQEVKIRSALTCELVNGICAMCYGRDLARGTPVNHGEAVGVIAAQSIGEPGTQLTMRTFHIGGAAQINEQSFVESNFDGKVTIRNRGIATNSEGASVAMVRNMVVAIVDADGTERVTHRVQYGARMRVDEGDTIKRGQRIAEWDPYTRPILTEVEGTIGFEDLVEGQSISETLDESTGIAKRVVIDWRSTGRGADLRPAIVVKGKDGKVLKLQRGGDARYMLSVDAILSVDIGSQVKPGDILARISTESAKTRDITGGLPRVAELFEARRPKDAAIIAETAGTIRFGRDYKNKRRISIEPTDKTEEPREYLIPKGKHIHLQDGDIVEKGDFIVEGNPAPHDILAIKGIEELAAYLVNEIQEVYRLQGVLINDKHIEVIVRQMLQKVEVTDQGDTDMISGEQVDKIEFDQNNDKAKEEGKKPATGTPVLLGITKASLQTRSFFSAASFQETTRVLTEAAVNGKVDPLEGLKENVIVGRLIPAGTGASMAKIREVAMKRDKLIQDEREKQAAITPAAPEAEPLALPPAE</sequence>
<proteinExistence type="inferred from homology"/>
<accession>B6JES1</accession>
<accession>F8BZD8</accession>
<gene>
    <name evidence="1" type="primary">rpoC</name>
    <name type="ordered locus">OCAR_5665</name>
    <name type="ordered locus">OCA5_c23410</name>
</gene>
<comment type="function">
    <text evidence="1">DNA-dependent RNA polymerase catalyzes the transcription of DNA into RNA using the four ribonucleoside triphosphates as substrates.</text>
</comment>
<comment type="catalytic activity">
    <reaction evidence="1">
        <text>RNA(n) + a ribonucleoside 5'-triphosphate = RNA(n+1) + diphosphate</text>
        <dbReference type="Rhea" id="RHEA:21248"/>
        <dbReference type="Rhea" id="RHEA-COMP:14527"/>
        <dbReference type="Rhea" id="RHEA-COMP:17342"/>
        <dbReference type="ChEBI" id="CHEBI:33019"/>
        <dbReference type="ChEBI" id="CHEBI:61557"/>
        <dbReference type="ChEBI" id="CHEBI:140395"/>
        <dbReference type="EC" id="2.7.7.6"/>
    </reaction>
</comment>
<comment type="cofactor">
    <cofactor evidence="1">
        <name>Mg(2+)</name>
        <dbReference type="ChEBI" id="CHEBI:18420"/>
    </cofactor>
    <text evidence="1">Binds 1 Mg(2+) ion per subunit.</text>
</comment>
<comment type="cofactor">
    <cofactor evidence="1">
        <name>Zn(2+)</name>
        <dbReference type="ChEBI" id="CHEBI:29105"/>
    </cofactor>
    <text evidence="1">Binds 2 Zn(2+) ions per subunit.</text>
</comment>
<comment type="subunit">
    <text evidence="1">The RNAP catalytic core consists of 2 alpha, 1 beta, 1 beta' and 1 omega subunit. When a sigma factor is associated with the core the holoenzyme is formed, which can initiate transcription.</text>
</comment>
<comment type="similarity">
    <text evidence="1">Belongs to the RNA polymerase beta' chain family.</text>
</comment>
<dbReference type="EC" id="2.7.7.6" evidence="1"/>
<dbReference type="EMBL" id="CP001196">
    <property type="protein sequence ID" value="ACI92793.1"/>
    <property type="molecule type" value="Genomic_DNA"/>
</dbReference>
<dbReference type="EMBL" id="CP002826">
    <property type="protein sequence ID" value="AEI07041.1"/>
    <property type="molecule type" value="Genomic_DNA"/>
</dbReference>
<dbReference type="RefSeq" id="WP_012562822.1">
    <property type="nucleotide sequence ID" value="NC_015684.1"/>
</dbReference>
<dbReference type="SMR" id="B6JES1"/>
<dbReference type="STRING" id="504832.OCA5_c23410"/>
<dbReference type="KEGG" id="oca:OCAR_5665"/>
<dbReference type="KEGG" id="ocg:OCA5_c23410"/>
<dbReference type="PATRIC" id="fig|504832.7.peg.2467"/>
<dbReference type="eggNOG" id="COG0086">
    <property type="taxonomic scope" value="Bacteria"/>
</dbReference>
<dbReference type="HOGENOM" id="CLU_000524_3_1_5"/>
<dbReference type="OrthoDB" id="9815296at2"/>
<dbReference type="Proteomes" id="UP000007730">
    <property type="component" value="Chromosome"/>
</dbReference>
<dbReference type="GO" id="GO:0000428">
    <property type="term" value="C:DNA-directed RNA polymerase complex"/>
    <property type="evidence" value="ECO:0007669"/>
    <property type="project" value="UniProtKB-KW"/>
</dbReference>
<dbReference type="GO" id="GO:0003677">
    <property type="term" value="F:DNA binding"/>
    <property type="evidence" value="ECO:0007669"/>
    <property type="project" value="UniProtKB-UniRule"/>
</dbReference>
<dbReference type="GO" id="GO:0003899">
    <property type="term" value="F:DNA-directed RNA polymerase activity"/>
    <property type="evidence" value="ECO:0007669"/>
    <property type="project" value="UniProtKB-UniRule"/>
</dbReference>
<dbReference type="GO" id="GO:0000287">
    <property type="term" value="F:magnesium ion binding"/>
    <property type="evidence" value="ECO:0007669"/>
    <property type="project" value="UniProtKB-UniRule"/>
</dbReference>
<dbReference type="GO" id="GO:0008270">
    <property type="term" value="F:zinc ion binding"/>
    <property type="evidence" value="ECO:0007669"/>
    <property type="project" value="UniProtKB-UniRule"/>
</dbReference>
<dbReference type="GO" id="GO:0006351">
    <property type="term" value="P:DNA-templated transcription"/>
    <property type="evidence" value="ECO:0007669"/>
    <property type="project" value="UniProtKB-UniRule"/>
</dbReference>
<dbReference type="CDD" id="cd02655">
    <property type="entry name" value="RNAP_beta'_C"/>
    <property type="match status" value="1"/>
</dbReference>
<dbReference type="CDD" id="cd01609">
    <property type="entry name" value="RNAP_beta'_N"/>
    <property type="match status" value="1"/>
</dbReference>
<dbReference type="Gene3D" id="1.10.132.30">
    <property type="match status" value="1"/>
</dbReference>
<dbReference type="Gene3D" id="1.10.150.390">
    <property type="match status" value="1"/>
</dbReference>
<dbReference type="Gene3D" id="1.10.1790.20">
    <property type="match status" value="1"/>
</dbReference>
<dbReference type="Gene3D" id="1.10.40.90">
    <property type="match status" value="1"/>
</dbReference>
<dbReference type="Gene3D" id="2.40.40.20">
    <property type="match status" value="1"/>
</dbReference>
<dbReference type="Gene3D" id="2.40.50.100">
    <property type="match status" value="3"/>
</dbReference>
<dbReference type="Gene3D" id="4.10.860.120">
    <property type="entry name" value="RNA polymerase II, clamp domain"/>
    <property type="match status" value="1"/>
</dbReference>
<dbReference type="Gene3D" id="1.10.274.100">
    <property type="entry name" value="RNA polymerase Rpb1, domain 3"/>
    <property type="match status" value="2"/>
</dbReference>
<dbReference type="HAMAP" id="MF_01322">
    <property type="entry name" value="RNApol_bact_RpoC"/>
    <property type="match status" value="1"/>
</dbReference>
<dbReference type="InterPro" id="IPR045867">
    <property type="entry name" value="DNA-dir_RpoC_beta_prime"/>
</dbReference>
<dbReference type="InterPro" id="IPR012754">
    <property type="entry name" value="DNA-dir_RpoC_beta_prime_bact"/>
</dbReference>
<dbReference type="InterPro" id="IPR000722">
    <property type="entry name" value="RNA_pol_asu"/>
</dbReference>
<dbReference type="InterPro" id="IPR006592">
    <property type="entry name" value="RNA_pol_N"/>
</dbReference>
<dbReference type="InterPro" id="IPR007080">
    <property type="entry name" value="RNA_pol_Rpb1_1"/>
</dbReference>
<dbReference type="InterPro" id="IPR007066">
    <property type="entry name" value="RNA_pol_Rpb1_3"/>
</dbReference>
<dbReference type="InterPro" id="IPR042102">
    <property type="entry name" value="RNA_pol_Rpb1_3_sf"/>
</dbReference>
<dbReference type="InterPro" id="IPR007083">
    <property type="entry name" value="RNA_pol_Rpb1_4"/>
</dbReference>
<dbReference type="InterPro" id="IPR007081">
    <property type="entry name" value="RNA_pol_Rpb1_5"/>
</dbReference>
<dbReference type="InterPro" id="IPR044893">
    <property type="entry name" value="RNA_pol_Rpb1_clamp_domain"/>
</dbReference>
<dbReference type="InterPro" id="IPR038120">
    <property type="entry name" value="Rpb1_funnel_sf"/>
</dbReference>
<dbReference type="NCBIfam" id="TIGR02386">
    <property type="entry name" value="rpoC_TIGR"/>
    <property type="match status" value="1"/>
</dbReference>
<dbReference type="PANTHER" id="PTHR19376">
    <property type="entry name" value="DNA-DIRECTED RNA POLYMERASE"/>
    <property type="match status" value="1"/>
</dbReference>
<dbReference type="PANTHER" id="PTHR19376:SF54">
    <property type="entry name" value="DNA-DIRECTED RNA POLYMERASE SUBUNIT BETA"/>
    <property type="match status" value="1"/>
</dbReference>
<dbReference type="Pfam" id="PF04997">
    <property type="entry name" value="RNA_pol_Rpb1_1"/>
    <property type="match status" value="1"/>
</dbReference>
<dbReference type="Pfam" id="PF00623">
    <property type="entry name" value="RNA_pol_Rpb1_2"/>
    <property type="match status" value="2"/>
</dbReference>
<dbReference type="Pfam" id="PF04983">
    <property type="entry name" value="RNA_pol_Rpb1_3"/>
    <property type="match status" value="1"/>
</dbReference>
<dbReference type="Pfam" id="PF05000">
    <property type="entry name" value="RNA_pol_Rpb1_4"/>
    <property type="match status" value="1"/>
</dbReference>
<dbReference type="Pfam" id="PF04998">
    <property type="entry name" value="RNA_pol_Rpb1_5"/>
    <property type="match status" value="1"/>
</dbReference>
<dbReference type="SMART" id="SM00663">
    <property type="entry name" value="RPOLA_N"/>
    <property type="match status" value="1"/>
</dbReference>
<dbReference type="SUPFAM" id="SSF64484">
    <property type="entry name" value="beta and beta-prime subunits of DNA dependent RNA-polymerase"/>
    <property type="match status" value="1"/>
</dbReference>
<name>RPOC_AFIC5</name>
<keyword id="KW-0240">DNA-directed RNA polymerase</keyword>
<keyword id="KW-0460">Magnesium</keyword>
<keyword id="KW-0479">Metal-binding</keyword>
<keyword id="KW-0548">Nucleotidyltransferase</keyword>
<keyword id="KW-1185">Reference proteome</keyword>
<keyword id="KW-0804">Transcription</keyword>
<keyword id="KW-0808">Transferase</keyword>
<keyword id="KW-0862">Zinc</keyword>
<evidence type="ECO:0000255" key="1">
    <source>
        <dbReference type="HAMAP-Rule" id="MF_01322"/>
    </source>
</evidence>
<evidence type="ECO:0000256" key="2">
    <source>
        <dbReference type="SAM" id="MobiDB-lite"/>
    </source>
</evidence>
<feature type="chain" id="PRO_1000141787" description="DNA-directed RNA polymerase subunit beta'">
    <location>
        <begin position="1"/>
        <end position="1399"/>
    </location>
</feature>
<feature type="region of interest" description="Disordered" evidence="2">
    <location>
        <begin position="1376"/>
        <end position="1399"/>
    </location>
</feature>
<feature type="binding site" evidence="1">
    <location>
        <position position="71"/>
    </location>
    <ligand>
        <name>Zn(2+)</name>
        <dbReference type="ChEBI" id="CHEBI:29105"/>
        <label>1</label>
    </ligand>
</feature>
<feature type="binding site" evidence="1">
    <location>
        <position position="73"/>
    </location>
    <ligand>
        <name>Zn(2+)</name>
        <dbReference type="ChEBI" id="CHEBI:29105"/>
        <label>1</label>
    </ligand>
</feature>
<feature type="binding site" evidence="1">
    <location>
        <position position="86"/>
    </location>
    <ligand>
        <name>Zn(2+)</name>
        <dbReference type="ChEBI" id="CHEBI:29105"/>
        <label>1</label>
    </ligand>
</feature>
<feature type="binding site" evidence="1">
    <location>
        <position position="89"/>
    </location>
    <ligand>
        <name>Zn(2+)</name>
        <dbReference type="ChEBI" id="CHEBI:29105"/>
        <label>1</label>
    </ligand>
</feature>
<feature type="binding site" evidence="1">
    <location>
        <position position="462"/>
    </location>
    <ligand>
        <name>Mg(2+)</name>
        <dbReference type="ChEBI" id="CHEBI:18420"/>
    </ligand>
</feature>
<feature type="binding site" evidence="1">
    <location>
        <position position="464"/>
    </location>
    <ligand>
        <name>Mg(2+)</name>
        <dbReference type="ChEBI" id="CHEBI:18420"/>
    </ligand>
</feature>
<feature type="binding site" evidence="1">
    <location>
        <position position="466"/>
    </location>
    <ligand>
        <name>Mg(2+)</name>
        <dbReference type="ChEBI" id="CHEBI:18420"/>
    </ligand>
</feature>
<feature type="binding site" evidence="1">
    <location>
        <position position="810"/>
    </location>
    <ligand>
        <name>Zn(2+)</name>
        <dbReference type="ChEBI" id="CHEBI:29105"/>
        <label>2</label>
    </ligand>
</feature>
<feature type="binding site" evidence="1">
    <location>
        <position position="884"/>
    </location>
    <ligand>
        <name>Zn(2+)</name>
        <dbReference type="ChEBI" id="CHEBI:29105"/>
        <label>2</label>
    </ligand>
</feature>
<feature type="binding site" evidence="1">
    <location>
        <position position="891"/>
    </location>
    <ligand>
        <name>Zn(2+)</name>
        <dbReference type="ChEBI" id="CHEBI:29105"/>
        <label>2</label>
    </ligand>
</feature>
<feature type="binding site" evidence="1">
    <location>
        <position position="894"/>
    </location>
    <ligand>
        <name>Zn(2+)</name>
        <dbReference type="ChEBI" id="CHEBI:29105"/>
        <label>2</label>
    </ligand>
</feature>
<reference key="1">
    <citation type="journal article" date="2008" name="J. Bacteriol.">
        <title>Genome sequence of the chemolithoautotrophic bacterium Oligotropha carboxidovorans OM5T.</title>
        <authorList>
            <person name="Paul D."/>
            <person name="Bridges S."/>
            <person name="Burgess S.C."/>
            <person name="Dandass Y."/>
            <person name="Lawrence M.L."/>
        </authorList>
    </citation>
    <scope>NUCLEOTIDE SEQUENCE [LARGE SCALE GENOMIC DNA]</scope>
    <source>
        <strain>ATCC 49405 / DSM 1227 / KCTC 32145 / OM5</strain>
    </source>
</reference>
<reference key="2">
    <citation type="journal article" date="2011" name="J. Bacteriol.">
        <title>Complete genome sequences of the chemolithoautotrophic Oligotropha carboxidovorans strains OM4 and OM5.</title>
        <authorList>
            <person name="Volland S."/>
            <person name="Rachinger M."/>
            <person name="Strittmatter A."/>
            <person name="Daniel R."/>
            <person name="Gottschalk G."/>
            <person name="Meyer O."/>
        </authorList>
    </citation>
    <scope>NUCLEOTIDE SEQUENCE [LARGE SCALE GENOMIC DNA]</scope>
    <source>
        <strain>ATCC 49405 / DSM 1227 / KCTC 32145 / OM5</strain>
    </source>
</reference>